<sequence length="228" mass="24586">MIGIIGAMEEEVAILKDKIVNLEIINVAHVVFYKGRLHDKEVILTQSGIGKVNVAISTTLLINRFHPDLIINTGSAGALDKSLGVGDIIVSDMVAYHDADARAFGYQLGQIPQMPAQFVADSHLIELAKEAINDQKWVAKSGLIVSGDSFIGTAEQRADIKTNFPQAMAAEMEATAIAQTCYQFNLPFIITRAISDLADGDAGITFEAFLEKAAIASSQIVDRLIKTI</sequence>
<gene>
    <name evidence="1" type="primary">mtnN</name>
    <name type="ordered locus">SSP1159</name>
</gene>
<comment type="function">
    <text evidence="1">Catalyzes the irreversible cleavage of the glycosidic bond in both 5'-methylthioadenosine (MTA) and S-adenosylhomocysteine (SAH/AdoHcy) to adenine and the corresponding thioribose, 5'-methylthioribose and S-ribosylhomocysteine, respectively. Also cleaves 5'-deoxyadenosine, a toxic by-product of radical S-adenosylmethionine (SAM) enzymes, into 5-deoxyribose and adenine.</text>
</comment>
<comment type="catalytic activity">
    <reaction evidence="1">
        <text>S-adenosyl-L-homocysteine + H2O = S-(5-deoxy-D-ribos-5-yl)-L-homocysteine + adenine</text>
        <dbReference type="Rhea" id="RHEA:17805"/>
        <dbReference type="ChEBI" id="CHEBI:15377"/>
        <dbReference type="ChEBI" id="CHEBI:16708"/>
        <dbReference type="ChEBI" id="CHEBI:57856"/>
        <dbReference type="ChEBI" id="CHEBI:58195"/>
        <dbReference type="EC" id="3.2.2.9"/>
    </reaction>
</comment>
<comment type="catalytic activity">
    <reaction evidence="1">
        <text>S-methyl-5'-thioadenosine + H2O = 5-(methylsulfanyl)-D-ribose + adenine</text>
        <dbReference type="Rhea" id="RHEA:13617"/>
        <dbReference type="ChEBI" id="CHEBI:15377"/>
        <dbReference type="ChEBI" id="CHEBI:16708"/>
        <dbReference type="ChEBI" id="CHEBI:17509"/>
        <dbReference type="ChEBI" id="CHEBI:78440"/>
        <dbReference type="EC" id="3.2.2.9"/>
    </reaction>
</comment>
<comment type="catalytic activity">
    <reaction evidence="1">
        <text>5'-deoxyadenosine + H2O = 5-deoxy-D-ribose + adenine</text>
        <dbReference type="Rhea" id="RHEA:29859"/>
        <dbReference type="ChEBI" id="CHEBI:15377"/>
        <dbReference type="ChEBI" id="CHEBI:16708"/>
        <dbReference type="ChEBI" id="CHEBI:17319"/>
        <dbReference type="ChEBI" id="CHEBI:149540"/>
        <dbReference type="EC" id="3.2.2.9"/>
    </reaction>
    <physiologicalReaction direction="left-to-right" evidence="1">
        <dbReference type="Rhea" id="RHEA:29860"/>
    </physiologicalReaction>
</comment>
<comment type="pathway">
    <text evidence="1">Amino-acid biosynthesis; L-methionine biosynthesis via salvage pathway; S-methyl-5-thio-alpha-D-ribose 1-phosphate from S-methyl-5'-thioadenosine (hydrolase route): step 1/2.</text>
</comment>
<comment type="similarity">
    <text evidence="1">Belongs to the PNP/UDP phosphorylase family. MtnN subfamily.</text>
</comment>
<organism>
    <name type="scientific">Staphylococcus saprophyticus subsp. saprophyticus (strain ATCC 15305 / DSM 20229 / NCIMB 8711 / NCTC 7292 / S-41)</name>
    <dbReference type="NCBI Taxonomy" id="342451"/>
    <lineage>
        <taxon>Bacteria</taxon>
        <taxon>Bacillati</taxon>
        <taxon>Bacillota</taxon>
        <taxon>Bacilli</taxon>
        <taxon>Bacillales</taxon>
        <taxon>Staphylococcaceae</taxon>
        <taxon>Staphylococcus</taxon>
    </lineage>
</organism>
<accession>Q49Y40</accession>
<dbReference type="EC" id="3.2.2.9" evidence="1"/>
<dbReference type="EMBL" id="AP008934">
    <property type="protein sequence ID" value="BAE18304.1"/>
    <property type="molecule type" value="Genomic_DNA"/>
</dbReference>
<dbReference type="RefSeq" id="WP_011302980.1">
    <property type="nucleotide sequence ID" value="NZ_MTGA01000038.1"/>
</dbReference>
<dbReference type="SMR" id="Q49Y40"/>
<dbReference type="GeneID" id="3617043"/>
<dbReference type="KEGG" id="ssp:SSP1159"/>
<dbReference type="PATRIC" id="fig|342451.11.peg.1157"/>
<dbReference type="eggNOG" id="COG0775">
    <property type="taxonomic scope" value="Bacteria"/>
</dbReference>
<dbReference type="HOGENOM" id="CLU_031248_2_2_9"/>
<dbReference type="OrthoDB" id="9792278at2"/>
<dbReference type="UniPathway" id="UPA00904">
    <property type="reaction ID" value="UER00871"/>
</dbReference>
<dbReference type="Proteomes" id="UP000006371">
    <property type="component" value="Chromosome"/>
</dbReference>
<dbReference type="GO" id="GO:0005829">
    <property type="term" value="C:cytosol"/>
    <property type="evidence" value="ECO:0007669"/>
    <property type="project" value="TreeGrafter"/>
</dbReference>
<dbReference type="GO" id="GO:0008782">
    <property type="term" value="F:adenosylhomocysteine nucleosidase activity"/>
    <property type="evidence" value="ECO:0007669"/>
    <property type="project" value="UniProtKB-UniRule"/>
</dbReference>
<dbReference type="GO" id="GO:0008930">
    <property type="term" value="F:methylthioadenosine nucleosidase activity"/>
    <property type="evidence" value="ECO:0007669"/>
    <property type="project" value="UniProtKB-UniRule"/>
</dbReference>
<dbReference type="GO" id="GO:0019509">
    <property type="term" value="P:L-methionine salvage from methylthioadenosine"/>
    <property type="evidence" value="ECO:0007669"/>
    <property type="project" value="UniProtKB-UniRule"/>
</dbReference>
<dbReference type="GO" id="GO:0019284">
    <property type="term" value="P:L-methionine salvage from S-adenosylmethionine"/>
    <property type="evidence" value="ECO:0007669"/>
    <property type="project" value="TreeGrafter"/>
</dbReference>
<dbReference type="GO" id="GO:0009164">
    <property type="term" value="P:nucleoside catabolic process"/>
    <property type="evidence" value="ECO:0007669"/>
    <property type="project" value="InterPro"/>
</dbReference>
<dbReference type="CDD" id="cd09008">
    <property type="entry name" value="MTAN"/>
    <property type="match status" value="1"/>
</dbReference>
<dbReference type="FunFam" id="3.40.50.1580:FF:000001">
    <property type="entry name" value="MTA/SAH nucleosidase family protein"/>
    <property type="match status" value="1"/>
</dbReference>
<dbReference type="Gene3D" id="3.40.50.1580">
    <property type="entry name" value="Nucleoside phosphorylase domain"/>
    <property type="match status" value="1"/>
</dbReference>
<dbReference type="HAMAP" id="MF_01684">
    <property type="entry name" value="Salvage_MtnN"/>
    <property type="match status" value="1"/>
</dbReference>
<dbReference type="InterPro" id="IPR010049">
    <property type="entry name" value="MTA_SAH_Nsdase"/>
</dbReference>
<dbReference type="InterPro" id="IPR000845">
    <property type="entry name" value="Nucleoside_phosphorylase_d"/>
</dbReference>
<dbReference type="InterPro" id="IPR035994">
    <property type="entry name" value="Nucleoside_phosphorylase_sf"/>
</dbReference>
<dbReference type="NCBIfam" id="TIGR01704">
    <property type="entry name" value="MTA_SAH-Nsdase"/>
    <property type="match status" value="1"/>
</dbReference>
<dbReference type="NCBIfam" id="NF004079">
    <property type="entry name" value="PRK05584.1"/>
    <property type="match status" value="1"/>
</dbReference>
<dbReference type="PANTHER" id="PTHR46832">
    <property type="entry name" value="5'-METHYLTHIOADENOSINE/S-ADENOSYLHOMOCYSTEINE NUCLEOSIDASE"/>
    <property type="match status" value="1"/>
</dbReference>
<dbReference type="PANTHER" id="PTHR46832:SF1">
    <property type="entry name" value="5'-METHYLTHIOADENOSINE_S-ADENOSYLHOMOCYSTEINE NUCLEOSIDASE"/>
    <property type="match status" value="1"/>
</dbReference>
<dbReference type="Pfam" id="PF01048">
    <property type="entry name" value="PNP_UDP_1"/>
    <property type="match status" value="1"/>
</dbReference>
<dbReference type="SUPFAM" id="SSF53167">
    <property type="entry name" value="Purine and uridine phosphorylases"/>
    <property type="match status" value="1"/>
</dbReference>
<proteinExistence type="inferred from homology"/>
<keyword id="KW-0028">Amino-acid biosynthesis</keyword>
<keyword id="KW-0378">Hydrolase</keyword>
<keyword id="KW-0486">Methionine biosynthesis</keyword>
<keyword id="KW-1185">Reference proteome</keyword>
<evidence type="ECO:0000255" key="1">
    <source>
        <dbReference type="HAMAP-Rule" id="MF_01684"/>
    </source>
</evidence>
<feature type="chain" id="PRO_0000359379" description="5'-methylthioadenosine/S-adenosylhomocysteine nucleosidase">
    <location>
        <begin position="1"/>
        <end position="228"/>
    </location>
</feature>
<feature type="active site" description="Proton acceptor" evidence="1">
    <location>
        <position position="11"/>
    </location>
</feature>
<feature type="active site" description="Proton donor" evidence="1">
    <location>
        <position position="196"/>
    </location>
</feature>
<feature type="binding site" evidence="1">
    <location>
        <position position="77"/>
    </location>
    <ligand>
        <name>substrate</name>
    </ligand>
</feature>
<feature type="binding site" evidence="1">
    <location>
        <position position="151"/>
    </location>
    <ligand>
        <name>substrate</name>
    </ligand>
</feature>
<feature type="binding site" evidence="1">
    <location>
        <begin position="172"/>
        <end position="173"/>
    </location>
    <ligand>
        <name>substrate</name>
    </ligand>
</feature>
<reference key="1">
    <citation type="journal article" date="2005" name="Proc. Natl. Acad. Sci. U.S.A.">
        <title>Whole genome sequence of Staphylococcus saprophyticus reveals the pathogenesis of uncomplicated urinary tract infection.</title>
        <authorList>
            <person name="Kuroda M."/>
            <person name="Yamashita A."/>
            <person name="Hirakawa H."/>
            <person name="Kumano M."/>
            <person name="Morikawa K."/>
            <person name="Higashide M."/>
            <person name="Maruyama A."/>
            <person name="Inose Y."/>
            <person name="Matoba K."/>
            <person name="Toh H."/>
            <person name="Kuhara S."/>
            <person name="Hattori M."/>
            <person name="Ohta T."/>
        </authorList>
    </citation>
    <scope>NUCLEOTIDE SEQUENCE [LARGE SCALE GENOMIC DNA]</scope>
    <source>
        <strain>ATCC 15305 / DSM 20229 / NCIMB 8711 / NCTC 7292 / S-41</strain>
    </source>
</reference>
<name>MTNN_STAS1</name>
<protein>
    <recommendedName>
        <fullName evidence="1">5'-methylthioadenosine/S-adenosylhomocysteine nucleosidase</fullName>
        <shortName evidence="1">MTA/SAH nucleosidase</shortName>
        <shortName evidence="1">MTAN</shortName>
        <ecNumber evidence="1">3.2.2.9</ecNumber>
    </recommendedName>
    <alternativeName>
        <fullName evidence="1">5'-deoxyadenosine nucleosidase</fullName>
        <shortName evidence="1">DOA nucleosidase</shortName>
        <shortName evidence="1">dAdo nucleosidase</shortName>
    </alternativeName>
    <alternativeName>
        <fullName evidence="1">5'-methylthioadenosine nucleosidase</fullName>
        <shortName evidence="1">MTA nucleosidase</shortName>
    </alternativeName>
    <alternativeName>
        <fullName evidence="1">S-adenosylhomocysteine nucleosidase</fullName>
        <shortName evidence="1">AdoHcy nucleosidase</shortName>
        <shortName evidence="1">SAH nucleosidase</shortName>
        <shortName evidence="1">SRH nucleosidase</shortName>
    </alternativeName>
</protein>